<dbReference type="EMBL" id="CP000111">
    <property type="protein sequence ID" value="ABB50785.1"/>
    <property type="molecule type" value="Genomic_DNA"/>
</dbReference>
<dbReference type="SMR" id="Q318B0"/>
<dbReference type="STRING" id="74546.PMT9312_1724"/>
<dbReference type="KEGG" id="pmi:PMT9312_1724"/>
<dbReference type="HOGENOM" id="CLU_2181556_0_0_3"/>
<dbReference type="OrthoDB" id="541524at2"/>
<dbReference type="Proteomes" id="UP000002715">
    <property type="component" value="Chromosome"/>
</dbReference>
<dbReference type="GO" id="GO:0005886">
    <property type="term" value="C:plasma membrane"/>
    <property type="evidence" value="ECO:0007669"/>
    <property type="project" value="UniProtKB-SubCell"/>
</dbReference>
<dbReference type="GO" id="GO:0034220">
    <property type="term" value="P:monoatomic ion transmembrane transport"/>
    <property type="evidence" value="ECO:0007669"/>
    <property type="project" value="UniProtKB-KW"/>
</dbReference>
<dbReference type="InterPro" id="IPR003691">
    <property type="entry name" value="FluC"/>
</dbReference>
<dbReference type="Pfam" id="PF02537">
    <property type="entry name" value="CRCB"/>
    <property type="match status" value="1"/>
</dbReference>
<accession>Q318B0</accession>
<name>FLUC1_PROM9</name>
<sequence>MKIKIYIYILLACYIASFLRLFINNNFIVSIIGSLLFGFFIDKRLSYSIEKIILSGFFSCFTSFSGFIYFLYKVFNQGDLMKFIIFCNLIIIINLLVMYFGFWISRKIT</sequence>
<protein>
    <recommendedName>
        <fullName evidence="1">Fluoride-specific ion channel FluC 1</fullName>
    </recommendedName>
</protein>
<keyword id="KW-0997">Cell inner membrane</keyword>
<keyword id="KW-1003">Cell membrane</keyword>
<keyword id="KW-0407">Ion channel</keyword>
<keyword id="KW-0406">Ion transport</keyword>
<keyword id="KW-0472">Membrane</keyword>
<keyword id="KW-0812">Transmembrane</keyword>
<keyword id="KW-1133">Transmembrane helix</keyword>
<keyword id="KW-0813">Transport</keyword>
<proteinExistence type="inferred from homology"/>
<evidence type="ECO:0000250" key="1">
    <source>
        <dbReference type="UniProtKB" id="P37002"/>
    </source>
</evidence>
<evidence type="ECO:0000255" key="2"/>
<evidence type="ECO:0000305" key="3"/>
<comment type="function">
    <text evidence="1">Fluoride-specific ion channel. Important for reducing fluoride concentration in the cell, thus reducing its toxicity.</text>
</comment>
<comment type="catalytic activity">
    <reaction evidence="1">
        <text>fluoride(in) = fluoride(out)</text>
        <dbReference type="Rhea" id="RHEA:76159"/>
        <dbReference type="ChEBI" id="CHEBI:17051"/>
    </reaction>
    <physiologicalReaction direction="left-to-right" evidence="1">
        <dbReference type="Rhea" id="RHEA:76160"/>
    </physiologicalReaction>
</comment>
<comment type="subcellular location">
    <subcellularLocation>
        <location evidence="1">Cell inner membrane</location>
        <topology evidence="2">Multi-pass membrane protein</topology>
    </subcellularLocation>
</comment>
<comment type="similarity">
    <text evidence="3">Belongs to the fluoride channel Fluc/FEX (TC 1.A.43) family.</text>
</comment>
<reference key="1">
    <citation type="journal article" date="2006" name="Science">
        <title>Genomic islands and the ecology and evolution of Prochlorococcus.</title>
        <authorList>
            <person name="Coleman M.L."/>
            <person name="Sullivan M.B."/>
            <person name="Martiny A.C."/>
            <person name="Steglich C."/>
            <person name="Barry K."/>
            <person name="Delong E.F."/>
            <person name="Chisholm S.W."/>
        </authorList>
    </citation>
    <scope>NUCLEOTIDE SEQUENCE [LARGE SCALE GENOMIC DNA]</scope>
    <source>
        <strain>MIT 9312</strain>
    </source>
</reference>
<gene>
    <name evidence="1" type="primary">fluC1</name>
    <name type="synonym">crcB1</name>
    <name type="ordered locus">PMT9312_1725</name>
    <name type="ordered locus">PMT9312_1724</name>
</gene>
<feature type="chain" id="PRO_0000252909" description="Fluoride-specific ion channel FluC 1">
    <location>
        <begin position="1"/>
        <end position="109"/>
    </location>
</feature>
<feature type="transmembrane region" description="Helical" evidence="2">
    <location>
        <begin position="21"/>
        <end position="41"/>
    </location>
</feature>
<feature type="transmembrane region" description="Helical" evidence="2">
    <location>
        <begin position="52"/>
        <end position="72"/>
    </location>
</feature>
<feature type="transmembrane region" description="Helical" evidence="2">
    <location>
        <begin position="84"/>
        <end position="104"/>
    </location>
</feature>
<organism>
    <name type="scientific">Prochlorococcus marinus (strain MIT 9312)</name>
    <dbReference type="NCBI Taxonomy" id="74546"/>
    <lineage>
        <taxon>Bacteria</taxon>
        <taxon>Bacillati</taxon>
        <taxon>Cyanobacteriota</taxon>
        <taxon>Cyanophyceae</taxon>
        <taxon>Synechococcales</taxon>
        <taxon>Prochlorococcaceae</taxon>
        <taxon>Prochlorococcus</taxon>
    </lineage>
</organism>